<protein>
    <recommendedName>
        <fullName evidence="3">ATP synthase F(1) complex subunit alpha, mitochondrial</fullName>
    </recommendedName>
    <alternativeName>
        <fullName evidence="3">ATP synthase F1 subunit alpha</fullName>
    </alternativeName>
</protein>
<name>ATPA_XENLA</name>
<feature type="transit peptide" description="Mitochondrion" evidence="4">
    <location>
        <begin position="1"/>
        <end status="unknown"/>
    </location>
</feature>
<feature type="chain" id="PRO_0000002428" description="ATP synthase F(1) complex subunit alpha, mitochondrial">
    <location>
        <begin status="unknown"/>
        <end position="545"/>
    </location>
</feature>
<feature type="binding site" evidence="3">
    <location>
        <position position="216"/>
    </location>
    <ligand>
        <name>ATP</name>
        <dbReference type="ChEBI" id="CHEBI:30616"/>
        <note>ligand shared between homotrimeric partners</note>
    </ligand>
</feature>
<feature type="binding site" evidence="3">
    <location>
        <position position="218"/>
    </location>
    <ligand>
        <name>ATP</name>
        <dbReference type="ChEBI" id="CHEBI:30616"/>
        <note>ligand shared between homotrimeric partners</note>
    </ligand>
</feature>
<feature type="binding site" evidence="3">
    <location>
        <position position="219"/>
    </location>
    <ligand>
        <name>ATP</name>
        <dbReference type="ChEBI" id="CHEBI:30616"/>
        <note>ligand shared between homotrimeric partners</note>
    </ligand>
</feature>
<feature type="binding site" evidence="3">
    <location>
        <position position="220"/>
    </location>
    <ligand>
        <name>ATP</name>
        <dbReference type="ChEBI" id="CHEBI:30616"/>
        <note>ligand shared between homotrimeric partners</note>
    </ligand>
</feature>
<feature type="binding site" evidence="3">
    <location>
        <position position="220"/>
    </location>
    <ligand>
        <name>Mg(2+)</name>
        <dbReference type="ChEBI" id="CHEBI:18420"/>
        <note>ligand shared between homotrimeric partners</note>
    </ligand>
</feature>
<feature type="binding site" evidence="3">
    <location>
        <position position="221"/>
    </location>
    <ligand>
        <name>ATP</name>
        <dbReference type="ChEBI" id="CHEBI:30616"/>
        <note>ligand shared between homotrimeric partners</note>
    </ligand>
</feature>
<feature type="binding site" evidence="3">
    <location>
        <position position="304"/>
    </location>
    <ligand>
        <name>Mg(2+)</name>
        <dbReference type="ChEBI" id="CHEBI:18420"/>
        <note>ligand shared between homotrimeric partners</note>
    </ligand>
</feature>
<feature type="binding site" evidence="3">
    <location>
        <position position="465"/>
    </location>
    <ligand>
        <name>ATP</name>
        <dbReference type="ChEBI" id="CHEBI:30616"/>
        <note>ligand shared between homotrimeric partners</note>
    </ligand>
</feature>
<feature type="binding site" evidence="3">
    <location>
        <position position="467"/>
    </location>
    <ligand>
        <name>ATP</name>
        <dbReference type="ChEBI" id="CHEBI:30616"/>
        <note>ligand shared between homotrimeric partners</note>
    </ligand>
</feature>
<feature type="site" description="Required for activity" evidence="1">
    <location>
        <position position="405"/>
    </location>
</feature>
<reference key="1">
    <citation type="journal article" date="1987" name="Proc. Natl. Acad. Sci. U.S.A.">
        <title>A maternal mRNA localized to the animal pole of Xenopus eggs encodes a subunit of mitochondrial ATPase.</title>
        <authorList>
            <person name="Weeks D.L."/>
            <person name="Melton D.A."/>
        </authorList>
    </citation>
    <scope>NUCLEOTIDE SEQUENCE [MRNA]</scope>
</reference>
<organism>
    <name type="scientific">Xenopus laevis</name>
    <name type="common">African clawed frog</name>
    <dbReference type="NCBI Taxonomy" id="8355"/>
    <lineage>
        <taxon>Eukaryota</taxon>
        <taxon>Metazoa</taxon>
        <taxon>Chordata</taxon>
        <taxon>Craniata</taxon>
        <taxon>Vertebrata</taxon>
        <taxon>Euteleostomi</taxon>
        <taxon>Amphibia</taxon>
        <taxon>Batrachia</taxon>
        <taxon>Anura</taxon>
        <taxon>Pipoidea</taxon>
        <taxon>Pipidae</taxon>
        <taxon>Xenopodinae</taxon>
        <taxon>Xenopus</taxon>
        <taxon>Xenopus</taxon>
    </lineage>
</organism>
<comment type="function">
    <text evidence="2 3">Subunit alpha, of the mitochondrial membrane ATP synthase complex (F(1)F(0) ATP synthase or Complex V) that produces ATP from ADP in the presence of a proton gradient across the membrane which is generated by electron transport complexes of the respiratory chain. ATP synthase complex consist of a soluble F(1) head domain - the catalytic core - and a membrane F(1) domain - the membrane proton channel. These two domains are linked by a central stalk rotating inside the F(1) region and a stationary peripheral stalk. During catalysis, ATP synthesis in the catalytic domain of F(1) is coupled via a rotary mechanism of the central stalk subunits to proton translocation (By similarity). In vivo, can only synthesize ATP although its ATP hydrolase activity can be activated artificially in vitro (By similarity). With the catalytic subunit beta (ATP5F1B), forms the catalytic core in the F(1) domain. Subunit alpha does not bear the catalytic high-affinity ATP-binding sites (By similarity).</text>
</comment>
<comment type="subunit">
    <text evidence="3">Homotrimer. Component of the ATP synthase complex composed at least of ATP5F1A/subunit alpha, ATP5F1B/subunit beta, ATP5MC1/subunit c (homooctomer), MT-ATP6/subunit a, MT-ATP8/subunit 8, ATP5ME/subunit e, ATP5MF/subunit f, ATP5MG/subunit g, ATP5MK/subunit k, ATP5MJ/subunit j, ATP5F1C/subunit gamma, ATP5F1D/subunit delta, ATP5F1E/subunit epsilon, ATP5PF/subunit F6, ATP5PB/subunit b, ATP5PD/subunit d, ATP5PO/subunit OSCP. ATP synthase complex consists of a soluble F(1) head domain (subunits alpha(3) and beta(3)) - the catalytic core - and a membrane F(0) domain - the membrane proton channel (subunits c, a, 8, e, f, g, k and j). These two domains are linked by a central stalk (subunits gamma, delta, and epsilon) rotating inside the F1 region and a stationary peripheral stalk (subunits F6, b, d, and OSCP).</text>
</comment>
<comment type="subcellular location">
    <subcellularLocation>
        <location evidence="2">Mitochondrion inner membrane</location>
        <topology evidence="2">Peripheral membrane protein</topology>
        <orientation evidence="2">Matrix side</orientation>
    </subcellularLocation>
</comment>
<comment type="similarity">
    <text evidence="5">Belongs to the ATPase alpha/beta chains family.</text>
</comment>
<accession>P08428</accession>
<dbReference type="EMBL" id="M16259">
    <property type="protein sequence ID" value="AAA49646.1"/>
    <property type="molecule type" value="mRNA"/>
</dbReference>
<dbReference type="PIR" id="A29865">
    <property type="entry name" value="A29865"/>
</dbReference>
<dbReference type="SMR" id="P08428"/>
<dbReference type="AGR" id="Xenbase:XB-GENE-944572"/>
<dbReference type="Xenbase" id="XB-GENE-944572">
    <property type="gene designation" value="atp5f1a.L"/>
</dbReference>
<dbReference type="Proteomes" id="UP000186698">
    <property type="component" value="Unplaced"/>
</dbReference>
<dbReference type="GO" id="GO:0005743">
    <property type="term" value="C:mitochondrial inner membrane"/>
    <property type="evidence" value="ECO:0007669"/>
    <property type="project" value="UniProtKB-SubCell"/>
</dbReference>
<dbReference type="GO" id="GO:0045259">
    <property type="term" value="C:proton-transporting ATP synthase complex"/>
    <property type="evidence" value="ECO:0000250"/>
    <property type="project" value="UniProtKB"/>
</dbReference>
<dbReference type="GO" id="GO:0043531">
    <property type="term" value="F:ADP binding"/>
    <property type="evidence" value="ECO:0000318"/>
    <property type="project" value="GO_Central"/>
</dbReference>
<dbReference type="GO" id="GO:0005524">
    <property type="term" value="F:ATP binding"/>
    <property type="evidence" value="ECO:0000318"/>
    <property type="project" value="GO_Central"/>
</dbReference>
<dbReference type="GO" id="GO:0046933">
    <property type="term" value="F:proton-transporting ATP synthase activity, rotational mechanism"/>
    <property type="evidence" value="ECO:0007669"/>
    <property type="project" value="InterPro"/>
</dbReference>
<dbReference type="GO" id="GO:0015986">
    <property type="term" value="P:proton motive force-driven ATP synthesis"/>
    <property type="evidence" value="ECO:0000250"/>
    <property type="project" value="UniProtKB"/>
</dbReference>
<dbReference type="CDD" id="cd18113">
    <property type="entry name" value="ATP-synt_F1_alpha_C"/>
    <property type="match status" value="1"/>
</dbReference>
<dbReference type="CDD" id="cd18116">
    <property type="entry name" value="ATP-synt_F1_alpha_N"/>
    <property type="match status" value="1"/>
</dbReference>
<dbReference type="CDD" id="cd01132">
    <property type="entry name" value="F1-ATPase_alpha_CD"/>
    <property type="match status" value="1"/>
</dbReference>
<dbReference type="FunFam" id="1.20.150.20:FF:000001">
    <property type="entry name" value="ATP synthase subunit alpha"/>
    <property type="match status" value="1"/>
</dbReference>
<dbReference type="FunFam" id="2.40.30.20:FF:000001">
    <property type="entry name" value="ATP synthase subunit alpha"/>
    <property type="match status" value="1"/>
</dbReference>
<dbReference type="FunFam" id="3.40.50.300:FF:002432">
    <property type="entry name" value="ATP synthase subunit alpha, mitochondrial"/>
    <property type="match status" value="1"/>
</dbReference>
<dbReference type="Gene3D" id="2.40.30.20">
    <property type="match status" value="1"/>
</dbReference>
<dbReference type="Gene3D" id="1.20.150.20">
    <property type="entry name" value="ATP synthase alpha/beta chain, C-terminal domain"/>
    <property type="match status" value="1"/>
</dbReference>
<dbReference type="Gene3D" id="3.40.50.300">
    <property type="entry name" value="P-loop containing nucleotide triphosphate hydrolases"/>
    <property type="match status" value="1"/>
</dbReference>
<dbReference type="HAMAP" id="MF_01346">
    <property type="entry name" value="ATP_synth_alpha_bact"/>
    <property type="match status" value="1"/>
</dbReference>
<dbReference type="InterPro" id="IPR023366">
    <property type="entry name" value="ATP_synth_asu-like_sf"/>
</dbReference>
<dbReference type="InterPro" id="IPR000793">
    <property type="entry name" value="ATP_synth_asu_C"/>
</dbReference>
<dbReference type="InterPro" id="IPR038376">
    <property type="entry name" value="ATP_synth_asu_C_sf"/>
</dbReference>
<dbReference type="InterPro" id="IPR033732">
    <property type="entry name" value="ATP_synth_F1_a_nt-bd_dom"/>
</dbReference>
<dbReference type="InterPro" id="IPR005294">
    <property type="entry name" value="ATP_synth_F1_asu"/>
</dbReference>
<dbReference type="InterPro" id="IPR020003">
    <property type="entry name" value="ATPase_a/bsu_AS"/>
</dbReference>
<dbReference type="InterPro" id="IPR004100">
    <property type="entry name" value="ATPase_F1/V1/A1_a/bsu_N"/>
</dbReference>
<dbReference type="InterPro" id="IPR036121">
    <property type="entry name" value="ATPase_F1/V1/A1_a/bsu_N_sf"/>
</dbReference>
<dbReference type="InterPro" id="IPR000194">
    <property type="entry name" value="ATPase_F1/V1/A1_a/bsu_nucl-bd"/>
</dbReference>
<dbReference type="InterPro" id="IPR027417">
    <property type="entry name" value="P-loop_NTPase"/>
</dbReference>
<dbReference type="NCBIfam" id="TIGR00962">
    <property type="entry name" value="atpA"/>
    <property type="match status" value="1"/>
</dbReference>
<dbReference type="NCBIfam" id="NF009884">
    <property type="entry name" value="PRK13343.1"/>
    <property type="match status" value="1"/>
</dbReference>
<dbReference type="PANTHER" id="PTHR48082">
    <property type="entry name" value="ATP SYNTHASE SUBUNIT ALPHA, MITOCHONDRIAL"/>
    <property type="match status" value="1"/>
</dbReference>
<dbReference type="PANTHER" id="PTHR48082:SF2">
    <property type="entry name" value="ATP SYNTHASE SUBUNIT ALPHA, MITOCHONDRIAL"/>
    <property type="match status" value="1"/>
</dbReference>
<dbReference type="Pfam" id="PF00006">
    <property type="entry name" value="ATP-synt_ab"/>
    <property type="match status" value="1"/>
</dbReference>
<dbReference type="Pfam" id="PF00306">
    <property type="entry name" value="ATP-synt_ab_C"/>
    <property type="match status" value="1"/>
</dbReference>
<dbReference type="Pfam" id="PF02874">
    <property type="entry name" value="ATP-synt_ab_N"/>
    <property type="match status" value="1"/>
</dbReference>
<dbReference type="PIRSF" id="PIRSF039088">
    <property type="entry name" value="F_ATPase_subunit_alpha"/>
    <property type="match status" value="1"/>
</dbReference>
<dbReference type="SUPFAM" id="SSF47917">
    <property type="entry name" value="C-terminal domain of alpha and beta subunits of F1 ATP synthase"/>
    <property type="match status" value="1"/>
</dbReference>
<dbReference type="SUPFAM" id="SSF50615">
    <property type="entry name" value="N-terminal domain of alpha and beta subunits of F1 ATP synthase"/>
    <property type="match status" value="1"/>
</dbReference>
<dbReference type="SUPFAM" id="SSF52540">
    <property type="entry name" value="P-loop containing nucleoside triphosphate hydrolases"/>
    <property type="match status" value="1"/>
</dbReference>
<dbReference type="PROSITE" id="PS00152">
    <property type="entry name" value="ATPASE_ALPHA_BETA"/>
    <property type="match status" value="1"/>
</dbReference>
<evidence type="ECO:0000250" key="1"/>
<evidence type="ECO:0000250" key="2">
    <source>
        <dbReference type="UniProtKB" id="P19483"/>
    </source>
</evidence>
<evidence type="ECO:0000250" key="3">
    <source>
        <dbReference type="UniProtKB" id="P25705"/>
    </source>
</evidence>
<evidence type="ECO:0000255" key="4"/>
<evidence type="ECO:0000305" key="5"/>
<proteinExistence type="evidence at transcript level"/>
<gene>
    <name evidence="3" type="primary">atp5f1a</name>
    <name type="synonym">an2</name>
    <name type="synonym">atp5a</name>
</gene>
<keyword id="KW-0066">ATP synthesis</keyword>
<keyword id="KW-0067">ATP-binding</keyword>
<keyword id="KW-0139">CF(1)</keyword>
<keyword id="KW-0375">Hydrogen ion transport</keyword>
<keyword id="KW-0406">Ion transport</keyword>
<keyword id="KW-0460">Magnesium</keyword>
<keyword id="KW-0472">Membrane</keyword>
<keyword id="KW-0479">Metal-binding</keyword>
<keyword id="KW-0496">Mitochondrion</keyword>
<keyword id="KW-0999">Mitochondrion inner membrane</keyword>
<keyword id="KW-0547">Nucleotide-binding</keyword>
<keyword id="KW-1185">Reference proteome</keyword>
<keyword id="KW-0809">Transit peptide</keyword>
<keyword id="KW-0813">Transport</keyword>
<sequence length="545" mass="58983">MLSVRVAAALARALPRQSGLVSKKALGAAFVATRNIHASGVWPPEKSGTAEVSSILEERILGADTTADLEETGRVLSIGDGIARVYGLRNVQAEEMVEFSSGLKGMSLNLEPDNVGVVGLANDKLIKEGDIVKRTGAIVDVPVGDELLGRVVDALGNTIDGKGPIGSKTRRRVGLKAPGIIPRISVREPMQTGIKAVDSLVPIGRGQRELIIGDRQTGKTSIAIDTIINQKRFNDGTDEKKKLYCIYVAIGQKRLTDADAMKYTIVVSRTASDAAPLQYLAPYSGCSMGEYFRDNGTHALIIYDDLSKQAVAYRQMSLLLRRPPGREAYPGDVFYLHSRLLERAAKMNDHFGGGSLTALPVIETQAGDVSAYIPTNVISITDGQIFLETELFYKGIRPAINVGLSVSRVGSAAQTRAMKQVAGTMKLELAQYREVAAFAQFGSDLDAATQQLLNRGVRLTELLKQGQYVPMAIEEQVTVIYAGVRGHLDKMEPSKITKFESAFLAHVKSQHQELLATIRADGKISEQADAKLKEIVLNFLSTFEA</sequence>